<comment type="function">
    <text evidence="1">Catalyzes the decarboxylation of four acetate groups of uroporphyrinogen-III to yield coproporphyrinogen-III.</text>
</comment>
<comment type="catalytic activity">
    <reaction evidence="1">
        <text>uroporphyrinogen III + 4 H(+) = coproporphyrinogen III + 4 CO2</text>
        <dbReference type="Rhea" id="RHEA:19865"/>
        <dbReference type="ChEBI" id="CHEBI:15378"/>
        <dbReference type="ChEBI" id="CHEBI:16526"/>
        <dbReference type="ChEBI" id="CHEBI:57308"/>
        <dbReference type="ChEBI" id="CHEBI:57309"/>
        <dbReference type="EC" id="4.1.1.37"/>
    </reaction>
</comment>
<comment type="pathway">
    <text evidence="1">Porphyrin-containing compound metabolism; protoporphyrin-IX biosynthesis; coproporphyrinogen-III from 5-aminolevulinate: step 4/4.</text>
</comment>
<comment type="subunit">
    <text evidence="1">Homodimer.</text>
</comment>
<comment type="subcellular location">
    <subcellularLocation>
        <location evidence="1">Cytoplasm</location>
    </subcellularLocation>
</comment>
<comment type="similarity">
    <text evidence="1">Belongs to the uroporphyrinogen decarboxylase family.</text>
</comment>
<comment type="sequence caution" evidence="2">
    <conflict type="erroneous initiation">
        <sequence resource="EMBL-CDS" id="CAH16245"/>
    </conflict>
</comment>
<accession>Q5WV12</accession>
<reference key="1">
    <citation type="journal article" date="2004" name="Nat. Genet.">
        <title>Evidence in the Legionella pneumophila genome for exploitation of host cell functions and high genome plasticity.</title>
        <authorList>
            <person name="Cazalet C."/>
            <person name="Rusniok C."/>
            <person name="Brueggemann H."/>
            <person name="Zidane N."/>
            <person name="Magnier A."/>
            <person name="Ma L."/>
            <person name="Tichit M."/>
            <person name="Jarraud S."/>
            <person name="Bouchier C."/>
            <person name="Vandenesch F."/>
            <person name="Kunst F."/>
            <person name="Etienne J."/>
            <person name="Glaser P."/>
            <person name="Buchrieser C."/>
        </authorList>
    </citation>
    <scope>NUCLEOTIDE SEQUENCE [LARGE SCALE GENOMIC DNA]</scope>
    <source>
        <strain>Lens</strain>
    </source>
</reference>
<dbReference type="EC" id="4.1.1.37" evidence="1"/>
<dbReference type="EMBL" id="CR628337">
    <property type="protein sequence ID" value="CAH16245.1"/>
    <property type="status" value="ALT_INIT"/>
    <property type="molecule type" value="Genomic_DNA"/>
</dbReference>
<dbReference type="RefSeq" id="WP_027225569.1">
    <property type="nucleotide sequence ID" value="NC_006369.1"/>
</dbReference>
<dbReference type="SMR" id="Q5WV12"/>
<dbReference type="KEGG" id="lpf:lpl2005"/>
<dbReference type="LegioList" id="lpl2005"/>
<dbReference type="HOGENOM" id="CLU_040933_0_0_6"/>
<dbReference type="UniPathway" id="UPA00251">
    <property type="reaction ID" value="UER00321"/>
</dbReference>
<dbReference type="Proteomes" id="UP000002517">
    <property type="component" value="Chromosome"/>
</dbReference>
<dbReference type="GO" id="GO:0005829">
    <property type="term" value="C:cytosol"/>
    <property type="evidence" value="ECO:0007669"/>
    <property type="project" value="TreeGrafter"/>
</dbReference>
<dbReference type="GO" id="GO:0004853">
    <property type="term" value="F:uroporphyrinogen decarboxylase activity"/>
    <property type="evidence" value="ECO:0007669"/>
    <property type="project" value="UniProtKB-UniRule"/>
</dbReference>
<dbReference type="GO" id="GO:0019353">
    <property type="term" value="P:protoporphyrinogen IX biosynthetic process from glutamate"/>
    <property type="evidence" value="ECO:0007669"/>
    <property type="project" value="TreeGrafter"/>
</dbReference>
<dbReference type="CDD" id="cd00717">
    <property type="entry name" value="URO-D"/>
    <property type="match status" value="1"/>
</dbReference>
<dbReference type="FunFam" id="3.20.20.210:FF:000001">
    <property type="entry name" value="Uroporphyrinogen decarboxylase"/>
    <property type="match status" value="1"/>
</dbReference>
<dbReference type="Gene3D" id="3.20.20.210">
    <property type="match status" value="1"/>
</dbReference>
<dbReference type="HAMAP" id="MF_00218">
    <property type="entry name" value="URO_D"/>
    <property type="match status" value="1"/>
</dbReference>
<dbReference type="InterPro" id="IPR038071">
    <property type="entry name" value="UROD/MetE-like_sf"/>
</dbReference>
<dbReference type="InterPro" id="IPR006361">
    <property type="entry name" value="Uroporphyrinogen_deCO2ase_HemE"/>
</dbReference>
<dbReference type="InterPro" id="IPR000257">
    <property type="entry name" value="Uroporphyrinogen_deCOase"/>
</dbReference>
<dbReference type="NCBIfam" id="TIGR01464">
    <property type="entry name" value="hemE"/>
    <property type="match status" value="1"/>
</dbReference>
<dbReference type="PANTHER" id="PTHR21091">
    <property type="entry name" value="METHYLTETRAHYDROFOLATE:HOMOCYSTEINE METHYLTRANSFERASE RELATED"/>
    <property type="match status" value="1"/>
</dbReference>
<dbReference type="PANTHER" id="PTHR21091:SF169">
    <property type="entry name" value="UROPORPHYRINOGEN DECARBOXYLASE"/>
    <property type="match status" value="1"/>
</dbReference>
<dbReference type="Pfam" id="PF01208">
    <property type="entry name" value="URO-D"/>
    <property type="match status" value="1"/>
</dbReference>
<dbReference type="SUPFAM" id="SSF51726">
    <property type="entry name" value="UROD/MetE-like"/>
    <property type="match status" value="1"/>
</dbReference>
<dbReference type="PROSITE" id="PS00906">
    <property type="entry name" value="UROD_1"/>
    <property type="match status" value="1"/>
</dbReference>
<dbReference type="PROSITE" id="PS00907">
    <property type="entry name" value="UROD_2"/>
    <property type="match status" value="1"/>
</dbReference>
<sequence length="352" mass="39354">MFDLNQSLFLRALRRQPVERTPIWIMRQAGRYLPEYRKVREYAGDFLNLCKNPELACEVTLQPLRRYALDAAILFSDILTIPDAMGLGLYFAEGEGPRFTNPLQDTKAIHTLKIPSIPESLSYVFDAARLIRQEMPKELPLIGFSGSPWTLACYMVEGGSSRDFKRILNLIYTEKEAAHLLLSKLAASVTAYLIEQIKAGVNAVMIFDTWGGVLTPQNYKDFSLAYMHQIVQQLKKEYPDIPVILFTKNGGQWLEWMAETGCDALGVDWTCDLASARKRVGGKVALQGNLDPAVLLTTKNCIRSEVGSVLASYGYGTGHIFNLGHGITPDVPPENVAIMIEAVHEISPQYHL</sequence>
<evidence type="ECO:0000255" key="1">
    <source>
        <dbReference type="HAMAP-Rule" id="MF_00218"/>
    </source>
</evidence>
<evidence type="ECO:0000305" key="2"/>
<organism>
    <name type="scientific">Legionella pneumophila (strain Lens)</name>
    <dbReference type="NCBI Taxonomy" id="297245"/>
    <lineage>
        <taxon>Bacteria</taxon>
        <taxon>Pseudomonadati</taxon>
        <taxon>Pseudomonadota</taxon>
        <taxon>Gammaproteobacteria</taxon>
        <taxon>Legionellales</taxon>
        <taxon>Legionellaceae</taxon>
        <taxon>Legionella</taxon>
    </lineage>
</organism>
<proteinExistence type="inferred from homology"/>
<feature type="chain" id="PRO_0000325659" description="Uroporphyrinogen decarboxylase">
    <location>
        <begin position="1"/>
        <end position="352"/>
    </location>
</feature>
<feature type="binding site" evidence="1">
    <location>
        <begin position="27"/>
        <end position="31"/>
    </location>
    <ligand>
        <name>substrate</name>
    </ligand>
</feature>
<feature type="binding site" evidence="1">
    <location>
        <position position="77"/>
    </location>
    <ligand>
        <name>substrate</name>
    </ligand>
</feature>
<feature type="binding site" evidence="1">
    <location>
        <position position="154"/>
    </location>
    <ligand>
        <name>substrate</name>
    </ligand>
</feature>
<feature type="binding site" evidence="1">
    <location>
        <position position="209"/>
    </location>
    <ligand>
        <name>substrate</name>
    </ligand>
</feature>
<feature type="binding site" evidence="1">
    <location>
        <position position="325"/>
    </location>
    <ligand>
        <name>substrate</name>
    </ligand>
</feature>
<feature type="site" description="Transition state stabilizer" evidence="1">
    <location>
        <position position="77"/>
    </location>
</feature>
<protein>
    <recommendedName>
        <fullName evidence="1">Uroporphyrinogen decarboxylase</fullName>
        <shortName evidence="1">UPD</shortName>
        <shortName evidence="1">URO-D</shortName>
        <ecNumber evidence="1">4.1.1.37</ecNumber>
    </recommendedName>
</protein>
<gene>
    <name evidence="1" type="primary">hemE</name>
    <name type="ordered locus">lpl2005</name>
</gene>
<keyword id="KW-0963">Cytoplasm</keyword>
<keyword id="KW-0210">Decarboxylase</keyword>
<keyword id="KW-0456">Lyase</keyword>
<keyword id="KW-0627">Porphyrin biosynthesis</keyword>
<name>DCUP_LEGPL</name>